<sequence>MLKALFGDPNTRKIKKLQPIVAEINLLEEDIQHLSDEQLKEKTVEFREMLDKANNDEELEDILEEILPDAFAVVREAAKRVLGMRHFDVQLMGGMVLHQGQIAEMKTGEGKTLVATLPAYLNGLTSRGVHIVTVNDYLARRDAEWMGQVHRFLGLTVGLIQSGMNPEERKKNYACDVTYTTNSELGFDYLRDNMATAMAEVVQRPPNYCIIDEVDSILIDEARTPLIISGQVERPTEKYIKAAEIAKQLEKQESEEDPKDYEVDEKARNVLMTDQGFEKAEQLLGVGDLYDQENPWAHYIFNAIKAKELFTKDVNYIVKNKEVVIVDEFTGRVLAGRRWSDGLHQAIEAKEGVPIQRETQTLATITYQNFFLLYNKLSGMTGTAKTEETELEKVYNLQVTIVPTNRPSQRYDFPDVVYKTEPAKWKAVAAEVEEMHKMGRPILVGTTSVEKSEVISALLQQSNIPHNILNARPENVERESEIVAQAGRKGAVTIATNMAGRGTDIILGGNSDYMARLKIREYLMPQIVMPEDDNLMAGGMGSNNRRPQGFGQDSKKKKWQPSADIFPTDLSPETQNMLKEAVKFAVDQYGQQSLSELEAEEKIAIASENAPTDDPVIEKLREVYKLIRKQYDAFTDKEHDEVVDKGGLHVIATERHESRRIDNQLRGRAGRQGDPGSTKFFLSLEDNLLRIFGGDRVAGLMNAFRVEEDMPIESKMLTRSLEGAQKKVETFYYDTRKQVFEYDEVMNNQRRAIYAERRRVLEGLDLKEQVLQYAEKTMDEIVDAYVNPELPPEEWDVENLVSKVKEFVYLLEDITAKDMEDMTVAEMKIFLHEEVRKAYDIKEDQVDKVRPGLMREAERFFILQQIDTLWREHLQSMDALRESIGLRGYGQKDPLIEYKQEGYEMFLEMMIDIRRNVVYSLFQFQPQGQPQAV</sequence>
<gene>
    <name evidence="1" type="primary">secA</name>
    <name type="ordered locus">cce_1945</name>
</gene>
<keyword id="KW-0067">ATP-binding</keyword>
<keyword id="KW-0997">Cell inner membrane</keyword>
<keyword id="KW-1003">Cell membrane</keyword>
<keyword id="KW-0963">Cytoplasm</keyword>
<keyword id="KW-0472">Membrane</keyword>
<keyword id="KW-0547">Nucleotide-binding</keyword>
<keyword id="KW-0653">Protein transport</keyword>
<keyword id="KW-1185">Reference proteome</keyword>
<keyword id="KW-0793">Thylakoid</keyword>
<keyword id="KW-1278">Translocase</keyword>
<keyword id="KW-0811">Translocation</keyword>
<keyword id="KW-0813">Transport</keyword>
<proteinExistence type="inferred from homology"/>
<comment type="function">
    <text evidence="1">Part of the Sec protein translocase complex. Interacts with the SecYEG preprotein conducting channel. Has a central role in coupling the hydrolysis of ATP to the transfer of proteins into and across the cell membrane, serving as an ATP-driven molecular motor driving the stepwise translocation of polypeptide chains across the membrane.</text>
</comment>
<comment type="function">
    <text evidence="1">Probably participates in protein translocation into and across both the cytoplasmic and thylakoid membranes in cyanobacterial cells.</text>
</comment>
<comment type="catalytic activity">
    <reaction evidence="1">
        <text>ATP + H2O + cellular proteinSide 1 = ADP + phosphate + cellular proteinSide 2.</text>
        <dbReference type="EC" id="7.4.2.8"/>
    </reaction>
</comment>
<comment type="subunit">
    <text evidence="1">Monomer and homodimer. Part of the essential Sec protein translocation apparatus which comprises SecA, SecYEG and auxiliary proteins SecDF. Other proteins may also be involved.</text>
</comment>
<comment type="subcellular location">
    <subcellularLocation>
        <location evidence="1">Cell inner membrane</location>
        <topology evidence="1">Peripheral membrane protein</topology>
        <orientation evidence="1">Cytoplasmic side</orientation>
    </subcellularLocation>
    <subcellularLocation>
        <location evidence="1">Cellular thylakoid membrane</location>
        <topology evidence="1">Peripheral membrane protein</topology>
        <orientation evidence="1">Cytoplasmic side</orientation>
    </subcellularLocation>
    <subcellularLocation>
        <location evidence="1">Cytoplasm</location>
    </subcellularLocation>
</comment>
<comment type="similarity">
    <text evidence="1">Belongs to the SecA family.</text>
</comment>
<protein>
    <recommendedName>
        <fullName evidence="1">Protein translocase subunit SecA</fullName>
        <ecNumber evidence="1">7.4.2.8</ecNumber>
    </recommendedName>
</protein>
<dbReference type="EC" id="7.4.2.8" evidence="1"/>
<dbReference type="EMBL" id="CP000806">
    <property type="protein sequence ID" value="ACB51295.1"/>
    <property type="molecule type" value="Genomic_DNA"/>
</dbReference>
<dbReference type="RefSeq" id="WP_009545749.1">
    <property type="nucleotide sequence ID" value="NC_010546.1"/>
</dbReference>
<dbReference type="SMR" id="B1X0K6"/>
<dbReference type="STRING" id="43989.cce_1945"/>
<dbReference type="KEGG" id="cyt:cce_1945"/>
<dbReference type="eggNOG" id="COG0653">
    <property type="taxonomic scope" value="Bacteria"/>
</dbReference>
<dbReference type="HOGENOM" id="CLU_005314_3_0_3"/>
<dbReference type="OrthoDB" id="9805579at2"/>
<dbReference type="Proteomes" id="UP000001203">
    <property type="component" value="Chromosome circular"/>
</dbReference>
<dbReference type="GO" id="GO:0031522">
    <property type="term" value="C:cell envelope Sec protein transport complex"/>
    <property type="evidence" value="ECO:0007669"/>
    <property type="project" value="TreeGrafter"/>
</dbReference>
<dbReference type="GO" id="GO:0005829">
    <property type="term" value="C:cytosol"/>
    <property type="evidence" value="ECO:0007669"/>
    <property type="project" value="TreeGrafter"/>
</dbReference>
<dbReference type="GO" id="GO:0031676">
    <property type="term" value="C:plasma membrane-derived thylakoid membrane"/>
    <property type="evidence" value="ECO:0007669"/>
    <property type="project" value="UniProtKB-SubCell"/>
</dbReference>
<dbReference type="GO" id="GO:0005524">
    <property type="term" value="F:ATP binding"/>
    <property type="evidence" value="ECO:0007669"/>
    <property type="project" value="UniProtKB-UniRule"/>
</dbReference>
<dbReference type="GO" id="GO:0008564">
    <property type="term" value="F:protein-exporting ATPase activity"/>
    <property type="evidence" value="ECO:0007669"/>
    <property type="project" value="UniProtKB-EC"/>
</dbReference>
<dbReference type="GO" id="GO:0065002">
    <property type="term" value="P:intracellular protein transmembrane transport"/>
    <property type="evidence" value="ECO:0007669"/>
    <property type="project" value="UniProtKB-UniRule"/>
</dbReference>
<dbReference type="GO" id="GO:0017038">
    <property type="term" value="P:protein import"/>
    <property type="evidence" value="ECO:0007669"/>
    <property type="project" value="InterPro"/>
</dbReference>
<dbReference type="GO" id="GO:0006605">
    <property type="term" value="P:protein targeting"/>
    <property type="evidence" value="ECO:0007669"/>
    <property type="project" value="UniProtKB-UniRule"/>
</dbReference>
<dbReference type="GO" id="GO:0043952">
    <property type="term" value="P:protein transport by the Sec complex"/>
    <property type="evidence" value="ECO:0007669"/>
    <property type="project" value="TreeGrafter"/>
</dbReference>
<dbReference type="CDD" id="cd17928">
    <property type="entry name" value="DEXDc_SecA"/>
    <property type="match status" value="1"/>
</dbReference>
<dbReference type="CDD" id="cd18803">
    <property type="entry name" value="SF2_C_secA"/>
    <property type="match status" value="1"/>
</dbReference>
<dbReference type="FunFam" id="3.90.1440.10:FF:000003">
    <property type="entry name" value="Preprotein translocase SecA subunit"/>
    <property type="match status" value="1"/>
</dbReference>
<dbReference type="FunFam" id="3.40.50.300:FF:000429">
    <property type="entry name" value="Preprotein translocase subunit SecA"/>
    <property type="match status" value="1"/>
</dbReference>
<dbReference type="FunFam" id="1.10.3060.10:FF:000003">
    <property type="entry name" value="Protein translocase subunit SecA"/>
    <property type="match status" value="1"/>
</dbReference>
<dbReference type="FunFam" id="3.40.50.300:FF:000334">
    <property type="entry name" value="Protein translocase subunit SecA"/>
    <property type="match status" value="1"/>
</dbReference>
<dbReference type="Gene3D" id="1.10.3060.10">
    <property type="entry name" value="Helical scaffold and wing domains of SecA"/>
    <property type="match status" value="1"/>
</dbReference>
<dbReference type="Gene3D" id="3.40.50.300">
    <property type="entry name" value="P-loop containing nucleotide triphosphate hydrolases"/>
    <property type="match status" value="2"/>
</dbReference>
<dbReference type="Gene3D" id="3.90.1440.10">
    <property type="entry name" value="SecA, preprotein cross-linking domain"/>
    <property type="match status" value="1"/>
</dbReference>
<dbReference type="HAMAP" id="MF_01382">
    <property type="entry name" value="SecA"/>
    <property type="match status" value="1"/>
</dbReference>
<dbReference type="InterPro" id="IPR014001">
    <property type="entry name" value="Helicase_ATP-bd"/>
</dbReference>
<dbReference type="InterPro" id="IPR027417">
    <property type="entry name" value="P-loop_NTPase"/>
</dbReference>
<dbReference type="InterPro" id="IPR000185">
    <property type="entry name" value="SecA"/>
</dbReference>
<dbReference type="InterPro" id="IPR020937">
    <property type="entry name" value="SecA_CS"/>
</dbReference>
<dbReference type="InterPro" id="IPR011115">
    <property type="entry name" value="SecA_DEAD"/>
</dbReference>
<dbReference type="InterPro" id="IPR014018">
    <property type="entry name" value="SecA_motor_DEAD"/>
</dbReference>
<dbReference type="InterPro" id="IPR011130">
    <property type="entry name" value="SecA_preprotein_X-link_dom"/>
</dbReference>
<dbReference type="InterPro" id="IPR044722">
    <property type="entry name" value="SecA_SF2_C"/>
</dbReference>
<dbReference type="InterPro" id="IPR011116">
    <property type="entry name" value="SecA_Wing/Scaffold"/>
</dbReference>
<dbReference type="InterPro" id="IPR036266">
    <property type="entry name" value="SecA_Wing/Scaffold_sf"/>
</dbReference>
<dbReference type="InterPro" id="IPR036670">
    <property type="entry name" value="SecA_X-link_sf"/>
</dbReference>
<dbReference type="NCBIfam" id="NF009538">
    <property type="entry name" value="PRK12904.1"/>
    <property type="match status" value="1"/>
</dbReference>
<dbReference type="NCBIfam" id="TIGR00963">
    <property type="entry name" value="secA"/>
    <property type="match status" value="1"/>
</dbReference>
<dbReference type="PANTHER" id="PTHR30612:SF0">
    <property type="entry name" value="CHLOROPLAST PROTEIN-TRANSPORTING ATPASE"/>
    <property type="match status" value="1"/>
</dbReference>
<dbReference type="PANTHER" id="PTHR30612">
    <property type="entry name" value="SECA INNER MEMBRANE COMPONENT OF SEC PROTEIN SECRETION SYSTEM"/>
    <property type="match status" value="1"/>
</dbReference>
<dbReference type="Pfam" id="PF21090">
    <property type="entry name" value="P-loop_SecA"/>
    <property type="match status" value="1"/>
</dbReference>
<dbReference type="Pfam" id="PF07517">
    <property type="entry name" value="SecA_DEAD"/>
    <property type="match status" value="1"/>
</dbReference>
<dbReference type="Pfam" id="PF01043">
    <property type="entry name" value="SecA_PP_bind"/>
    <property type="match status" value="1"/>
</dbReference>
<dbReference type="Pfam" id="PF07516">
    <property type="entry name" value="SecA_SW"/>
    <property type="match status" value="1"/>
</dbReference>
<dbReference type="PRINTS" id="PR00906">
    <property type="entry name" value="SECA"/>
</dbReference>
<dbReference type="SMART" id="SM00957">
    <property type="entry name" value="SecA_DEAD"/>
    <property type="match status" value="1"/>
</dbReference>
<dbReference type="SMART" id="SM00958">
    <property type="entry name" value="SecA_PP_bind"/>
    <property type="match status" value="1"/>
</dbReference>
<dbReference type="SUPFAM" id="SSF81886">
    <property type="entry name" value="Helical scaffold and wing domains of SecA"/>
    <property type="match status" value="1"/>
</dbReference>
<dbReference type="SUPFAM" id="SSF52540">
    <property type="entry name" value="P-loop containing nucleoside triphosphate hydrolases"/>
    <property type="match status" value="2"/>
</dbReference>
<dbReference type="SUPFAM" id="SSF81767">
    <property type="entry name" value="Pre-protein crosslinking domain of SecA"/>
    <property type="match status" value="1"/>
</dbReference>
<dbReference type="PROSITE" id="PS01312">
    <property type="entry name" value="SECA"/>
    <property type="match status" value="1"/>
</dbReference>
<dbReference type="PROSITE" id="PS51196">
    <property type="entry name" value="SECA_MOTOR_DEAD"/>
    <property type="match status" value="1"/>
</dbReference>
<organism>
    <name type="scientific">Crocosphaera subtropica (strain ATCC 51142 / BH68)</name>
    <name type="common">Cyanothece sp. (strain ATCC 51142)</name>
    <dbReference type="NCBI Taxonomy" id="43989"/>
    <lineage>
        <taxon>Bacteria</taxon>
        <taxon>Bacillati</taxon>
        <taxon>Cyanobacteriota</taxon>
        <taxon>Cyanophyceae</taxon>
        <taxon>Oscillatoriophycideae</taxon>
        <taxon>Chroococcales</taxon>
        <taxon>Aphanothecaceae</taxon>
        <taxon>Crocosphaera</taxon>
        <taxon>Crocosphaera subtropica</taxon>
    </lineage>
</organism>
<feature type="chain" id="PRO_1000184223" description="Protein translocase subunit SecA">
    <location>
        <begin position="1"/>
        <end position="933"/>
    </location>
</feature>
<feature type="region of interest" description="Disordered" evidence="2">
    <location>
        <begin position="539"/>
        <end position="570"/>
    </location>
</feature>
<feature type="binding site" evidence="1">
    <location>
        <position position="90"/>
    </location>
    <ligand>
        <name>ATP</name>
        <dbReference type="ChEBI" id="CHEBI:30616"/>
    </ligand>
</feature>
<feature type="binding site" evidence="1">
    <location>
        <begin position="108"/>
        <end position="112"/>
    </location>
    <ligand>
        <name>ATP</name>
        <dbReference type="ChEBI" id="CHEBI:30616"/>
    </ligand>
</feature>
<feature type="binding site" evidence="1">
    <location>
        <position position="504"/>
    </location>
    <ligand>
        <name>ATP</name>
        <dbReference type="ChEBI" id="CHEBI:30616"/>
    </ligand>
</feature>
<evidence type="ECO:0000255" key="1">
    <source>
        <dbReference type="HAMAP-Rule" id="MF_01382"/>
    </source>
</evidence>
<evidence type="ECO:0000256" key="2">
    <source>
        <dbReference type="SAM" id="MobiDB-lite"/>
    </source>
</evidence>
<accession>B1X0K6</accession>
<reference key="1">
    <citation type="journal article" date="2008" name="Proc. Natl. Acad. Sci. U.S.A.">
        <title>The genome of Cyanothece 51142, a unicellular diazotrophic cyanobacterium important in the marine nitrogen cycle.</title>
        <authorList>
            <person name="Welsh E.A."/>
            <person name="Liberton M."/>
            <person name="Stoeckel J."/>
            <person name="Loh T."/>
            <person name="Elvitigala T."/>
            <person name="Wang C."/>
            <person name="Wollam A."/>
            <person name="Fulton R.S."/>
            <person name="Clifton S.W."/>
            <person name="Jacobs J.M."/>
            <person name="Aurora R."/>
            <person name="Ghosh B.K."/>
            <person name="Sherman L.A."/>
            <person name="Smith R.D."/>
            <person name="Wilson R.K."/>
            <person name="Pakrasi H.B."/>
        </authorList>
    </citation>
    <scope>NUCLEOTIDE SEQUENCE [LARGE SCALE GENOMIC DNA]</scope>
    <source>
        <strain>ATCC 51142 / BH68</strain>
    </source>
</reference>
<name>SECA_CROS5</name>